<sequence length="221" mass="23863">MERTGHAFADRQRLQRALTHASARGANAGTDYERFEFLGDRVLGLVVADMLLAAFPDAAEGELSLRLNALVNAEALSEIAEHIGLPDLIRAGSDVRGLEGRKRVNLRADALESLIAVLYLDGGLEAARAFIHKYWQPRSQASGAARRDAKTELQEWAHQAASAVPAYQIDSREGPDHDPLFTVSVRVGAFQPATGSGRSKREAEQAAAAALLLREGVWNAA</sequence>
<evidence type="ECO:0000255" key="1">
    <source>
        <dbReference type="HAMAP-Rule" id="MF_00104"/>
    </source>
</evidence>
<gene>
    <name evidence="1" type="primary">rnc</name>
    <name type="ordered locus">mlr7765</name>
</gene>
<proteinExistence type="inferred from homology"/>
<comment type="function">
    <text evidence="1">Digests double-stranded RNA. Involved in the processing of primary rRNA transcript to yield the immediate precursors to the large and small rRNAs (23S and 16S). Processes some mRNAs, and tRNAs when they are encoded in the rRNA operon. Processes pre-crRNA and tracrRNA of type II CRISPR loci if present in the organism.</text>
</comment>
<comment type="catalytic activity">
    <reaction evidence="1">
        <text>Endonucleolytic cleavage to 5'-phosphomonoester.</text>
        <dbReference type="EC" id="3.1.26.3"/>
    </reaction>
</comment>
<comment type="cofactor">
    <cofactor evidence="1">
        <name>Mg(2+)</name>
        <dbReference type="ChEBI" id="CHEBI:18420"/>
    </cofactor>
</comment>
<comment type="subunit">
    <text evidence="1">Homodimer.</text>
</comment>
<comment type="subcellular location">
    <subcellularLocation>
        <location evidence="1">Cytoplasm</location>
    </subcellularLocation>
</comment>
<comment type="similarity">
    <text evidence="1">Belongs to the ribonuclease III family.</text>
</comment>
<dbReference type="EC" id="3.1.26.3" evidence="1"/>
<dbReference type="EMBL" id="BA000012">
    <property type="protein sequence ID" value="BAB54157.1"/>
    <property type="molecule type" value="Genomic_DNA"/>
</dbReference>
<dbReference type="SMR" id="Q985A6"/>
<dbReference type="KEGG" id="mlo:mlr7765"/>
<dbReference type="eggNOG" id="COG0571">
    <property type="taxonomic scope" value="Bacteria"/>
</dbReference>
<dbReference type="HOGENOM" id="CLU_000907_1_1_5"/>
<dbReference type="Proteomes" id="UP000000552">
    <property type="component" value="Chromosome"/>
</dbReference>
<dbReference type="GO" id="GO:0005737">
    <property type="term" value="C:cytoplasm"/>
    <property type="evidence" value="ECO:0007669"/>
    <property type="project" value="UniProtKB-SubCell"/>
</dbReference>
<dbReference type="GO" id="GO:0003725">
    <property type="term" value="F:double-stranded RNA binding"/>
    <property type="evidence" value="ECO:0007669"/>
    <property type="project" value="TreeGrafter"/>
</dbReference>
<dbReference type="GO" id="GO:0046872">
    <property type="term" value="F:metal ion binding"/>
    <property type="evidence" value="ECO:0007669"/>
    <property type="project" value="UniProtKB-KW"/>
</dbReference>
<dbReference type="GO" id="GO:0004525">
    <property type="term" value="F:ribonuclease III activity"/>
    <property type="evidence" value="ECO:0007669"/>
    <property type="project" value="UniProtKB-UniRule"/>
</dbReference>
<dbReference type="GO" id="GO:0019843">
    <property type="term" value="F:rRNA binding"/>
    <property type="evidence" value="ECO:0007669"/>
    <property type="project" value="UniProtKB-KW"/>
</dbReference>
<dbReference type="GO" id="GO:0006397">
    <property type="term" value="P:mRNA processing"/>
    <property type="evidence" value="ECO:0007669"/>
    <property type="project" value="UniProtKB-UniRule"/>
</dbReference>
<dbReference type="GO" id="GO:0010468">
    <property type="term" value="P:regulation of gene expression"/>
    <property type="evidence" value="ECO:0007669"/>
    <property type="project" value="TreeGrafter"/>
</dbReference>
<dbReference type="GO" id="GO:0006364">
    <property type="term" value="P:rRNA processing"/>
    <property type="evidence" value="ECO:0007669"/>
    <property type="project" value="UniProtKB-UniRule"/>
</dbReference>
<dbReference type="GO" id="GO:0008033">
    <property type="term" value="P:tRNA processing"/>
    <property type="evidence" value="ECO:0007669"/>
    <property type="project" value="UniProtKB-KW"/>
</dbReference>
<dbReference type="CDD" id="cd10845">
    <property type="entry name" value="DSRM_RNAse_III_family"/>
    <property type="match status" value="1"/>
</dbReference>
<dbReference type="CDD" id="cd00593">
    <property type="entry name" value="RIBOc"/>
    <property type="match status" value="1"/>
</dbReference>
<dbReference type="FunFam" id="3.30.160.20:FF:000003">
    <property type="entry name" value="Ribonuclease 3"/>
    <property type="match status" value="1"/>
</dbReference>
<dbReference type="Gene3D" id="3.30.160.20">
    <property type="match status" value="1"/>
</dbReference>
<dbReference type="Gene3D" id="1.10.1520.10">
    <property type="entry name" value="Ribonuclease III domain"/>
    <property type="match status" value="1"/>
</dbReference>
<dbReference type="HAMAP" id="MF_00104">
    <property type="entry name" value="RNase_III"/>
    <property type="match status" value="1"/>
</dbReference>
<dbReference type="InterPro" id="IPR014720">
    <property type="entry name" value="dsRBD_dom"/>
</dbReference>
<dbReference type="InterPro" id="IPR011907">
    <property type="entry name" value="RNase_III"/>
</dbReference>
<dbReference type="InterPro" id="IPR000999">
    <property type="entry name" value="RNase_III_dom"/>
</dbReference>
<dbReference type="InterPro" id="IPR036389">
    <property type="entry name" value="RNase_III_sf"/>
</dbReference>
<dbReference type="NCBIfam" id="TIGR02191">
    <property type="entry name" value="RNaseIII"/>
    <property type="match status" value="1"/>
</dbReference>
<dbReference type="PANTHER" id="PTHR11207:SF0">
    <property type="entry name" value="RIBONUCLEASE 3"/>
    <property type="match status" value="1"/>
</dbReference>
<dbReference type="PANTHER" id="PTHR11207">
    <property type="entry name" value="RIBONUCLEASE III"/>
    <property type="match status" value="1"/>
</dbReference>
<dbReference type="Pfam" id="PF00035">
    <property type="entry name" value="dsrm"/>
    <property type="match status" value="1"/>
</dbReference>
<dbReference type="Pfam" id="PF14622">
    <property type="entry name" value="Ribonucleas_3_3"/>
    <property type="match status" value="1"/>
</dbReference>
<dbReference type="SMART" id="SM00358">
    <property type="entry name" value="DSRM"/>
    <property type="match status" value="1"/>
</dbReference>
<dbReference type="SMART" id="SM00535">
    <property type="entry name" value="RIBOc"/>
    <property type="match status" value="1"/>
</dbReference>
<dbReference type="SUPFAM" id="SSF54768">
    <property type="entry name" value="dsRNA-binding domain-like"/>
    <property type="match status" value="1"/>
</dbReference>
<dbReference type="SUPFAM" id="SSF69065">
    <property type="entry name" value="RNase III domain-like"/>
    <property type="match status" value="1"/>
</dbReference>
<dbReference type="PROSITE" id="PS50137">
    <property type="entry name" value="DS_RBD"/>
    <property type="match status" value="1"/>
</dbReference>
<dbReference type="PROSITE" id="PS00517">
    <property type="entry name" value="RNASE_3_1"/>
    <property type="match status" value="1"/>
</dbReference>
<dbReference type="PROSITE" id="PS50142">
    <property type="entry name" value="RNASE_3_2"/>
    <property type="match status" value="1"/>
</dbReference>
<name>RNC_RHILO</name>
<reference key="1">
    <citation type="journal article" date="2000" name="DNA Res.">
        <title>Complete genome structure of the nitrogen-fixing symbiotic bacterium Mesorhizobium loti.</title>
        <authorList>
            <person name="Kaneko T."/>
            <person name="Nakamura Y."/>
            <person name="Sato S."/>
            <person name="Asamizu E."/>
            <person name="Kato T."/>
            <person name="Sasamoto S."/>
            <person name="Watanabe A."/>
            <person name="Idesawa K."/>
            <person name="Ishikawa A."/>
            <person name="Kawashima K."/>
            <person name="Kimura T."/>
            <person name="Kishida Y."/>
            <person name="Kiyokawa C."/>
            <person name="Kohara M."/>
            <person name="Matsumoto M."/>
            <person name="Matsuno A."/>
            <person name="Mochizuki Y."/>
            <person name="Nakayama S."/>
            <person name="Nakazaki N."/>
            <person name="Shimpo S."/>
            <person name="Sugimoto M."/>
            <person name="Takeuchi C."/>
            <person name="Yamada M."/>
            <person name="Tabata S."/>
        </authorList>
    </citation>
    <scope>NUCLEOTIDE SEQUENCE [LARGE SCALE GENOMIC DNA]</scope>
    <source>
        <strain>LMG 29417 / CECT 9101 / MAFF 303099</strain>
    </source>
</reference>
<protein>
    <recommendedName>
        <fullName evidence="1">Ribonuclease 3</fullName>
        <ecNumber evidence="1">3.1.26.3</ecNumber>
    </recommendedName>
    <alternativeName>
        <fullName evidence="1">Ribonuclease III</fullName>
        <shortName evidence="1">RNase III</shortName>
    </alternativeName>
</protein>
<accession>Q985A6</accession>
<feature type="chain" id="PRO_0000228572" description="Ribonuclease 3">
    <location>
        <begin position="1"/>
        <end position="221"/>
    </location>
</feature>
<feature type="domain" description="RNase III" evidence="1">
    <location>
        <begin position="1"/>
        <end position="123"/>
    </location>
</feature>
<feature type="domain" description="DRBM" evidence="1">
    <location>
        <begin position="148"/>
        <end position="217"/>
    </location>
</feature>
<feature type="active site" evidence="1">
    <location>
        <position position="40"/>
    </location>
</feature>
<feature type="active site" evidence="1">
    <location>
        <position position="112"/>
    </location>
</feature>
<feature type="binding site" evidence="1">
    <location>
        <position position="36"/>
    </location>
    <ligand>
        <name>Mg(2+)</name>
        <dbReference type="ChEBI" id="CHEBI:18420"/>
    </ligand>
</feature>
<feature type="binding site" evidence="1">
    <location>
        <position position="109"/>
    </location>
    <ligand>
        <name>Mg(2+)</name>
        <dbReference type="ChEBI" id="CHEBI:18420"/>
    </ligand>
</feature>
<feature type="binding site" evidence="1">
    <location>
        <position position="112"/>
    </location>
    <ligand>
        <name>Mg(2+)</name>
        <dbReference type="ChEBI" id="CHEBI:18420"/>
    </ligand>
</feature>
<keyword id="KW-0963">Cytoplasm</keyword>
<keyword id="KW-0255">Endonuclease</keyword>
<keyword id="KW-0378">Hydrolase</keyword>
<keyword id="KW-0460">Magnesium</keyword>
<keyword id="KW-0479">Metal-binding</keyword>
<keyword id="KW-0507">mRNA processing</keyword>
<keyword id="KW-0540">Nuclease</keyword>
<keyword id="KW-0694">RNA-binding</keyword>
<keyword id="KW-0698">rRNA processing</keyword>
<keyword id="KW-0699">rRNA-binding</keyword>
<keyword id="KW-0819">tRNA processing</keyword>
<organism>
    <name type="scientific">Mesorhizobium japonicum (strain LMG 29417 / CECT 9101 / MAFF 303099)</name>
    <name type="common">Mesorhizobium loti (strain MAFF 303099)</name>
    <dbReference type="NCBI Taxonomy" id="266835"/>
    <lineage>
        <taxon>Bacteria</taxon>
        <taxon>Pseudomonadati</taxon>
        <taxon>Pseudomonadota</taxon>
        <taxon>Alphaproteobacteria</taxon>
        <taxon>Hyphomicrobiales</taxon>
        <taxon>Phyllobacteriaceae</taxon>
        <taxon>Mesorhizobium</taxon>
    </lineage>
</organism>